<comment type="function">
    <text evidence="2 8">May play a role in hematopoiesis. In the cardiovascular system, could regulate growth factors or participate in cell signaling in maintaining large vessel integrity (By similarity). Component of the elastin-associated microfibrils (PubMed:8557636).</text>
</comment>
<comment type="subunit">
    <text evidence="1 2">Interacts with TGFB2. Interacts with BMP2. Interacts with FBN1 (via N-terminal domain) and FBN2.</text>
</comment>
<comment type="subcellular location">
    <subcellularLocation>
        <location>Secreted</location>
        <location>Extracellular space</location>
        <location>Extracellular matrix</location>
    </subcellularLocation>
</comment>
<comment type="alternative products">
    <event type="alternative splicing"/>
    <isoform>
        <id>Q13361-1</id>
        <name>1</name>
        <sequence type="displayed"/>
    </isoform>
    <isoform>
        <id>Q13361-2</id>
        <name>2</name>
        <sequence type="described" ref="VSP_056618"/>
    </isoform>
</comment>
<comment type="PTM">
    <text>Forms intermolecular disulfide bonds either with other MAGP-2 molecules or with other components of the microfibrils.</text>
</comment>
<comment type="PTM">
    <text evidence="5 6">N- and O-glycosylated. O-glycosylated with core 1 or possibly core 8 glycans. O-glycan heterogeneity at Thr-54: HexHexNAc (major) and HexHexNAc + sulfate (minor).</text>
</comment>
<comment type="disease" evidence="7">
    <disease id="DI-04293">
        <name>Aortic aneurysm, familial thoracic 9</name>
        <acronym>AAT9</acronym>
        <description>A disease characterized by permanent dilation of the thoracic aorta usually due to degenerative changes in the aortic wall. It is primarily associated with a characteristic histologic appearance known as 'medial necrosis' or 'Erdheim cystic medial necrosis' in which there is degeneration and fragmentation of elastic fibers, loss of smooth muscle cells, and an accumulation of basophilic ground substance.</description>
        <dbReference type="MIM" id="616166"/>
    </disease>
    <text>The disease is caused by variants affecting the gene represented in this entry.</text>
</comment>
<comment type="similarity">
    <text evidence="11">Belongs to the MFAP family.</text>
</comment>
<proteinExistence type="evidence at protein level"/>
<organism>
    <name type="scientific">Homo sapiens</name>
    <name type="common">Human</name>
    <dbReference type="NCBI Taxonomy" id="9606"/>
    <lineage>
        <taxon>Eukaryota</taxon>
        <taxon>Metazoa</taxon>
        <taxon>Chordata</taxon>
        <taxon>Craniata</taxon>
        <taxon>Vertebrata</taxon>
        <taxon>Euteleostomi</taxon>
        <taxon>Mammalia</taxon>
        <taxon>Eutheria</taxon>
        <taxon>Euarchontoglires</taxon>
        <taxon>Primates</taxon>
        <taxon>Haplorrhini</taxon>
        <taxon>Catarrhini</taxon>
        <taxon>Hominidae</taxon>
        <taxon>Homo</taxon>
    </lineage>
</organism>
<protein>
    <recommendedName>
        <fullName>Microfibrillar-associated protein 5</fullName>
        <shortName>MFAP-5</shortName>
    </recommendedName>
    <alternativeName>
        <fullName>MP25</fullName>
    </alternativeName>
    <alternativeName>
        <fullName>Microfibril-associated glycoprotein 2</fullName>
        <shortName>MAGP-2</shortName>
    </alternativeName>
</protein>
<reference key="1">
    <citation type="journal article" date="1996" name="J. Biol. Chem.">
        <title>Further characterization of proteins associated with elastic fiber microfibrils including the molecular cloning of MAGP-2 (MP25).</title>
        <authorList>
            <person name="Gibson M.A."/>
            <person name="Hatzinikolas G."/>
            <person name="Kumaratilake J.S."/>
            <person name="Sandberg L.B."/>
            <person name="Nicholl J.K."/>
            <person name="Sutherland G.R."/>
            <person name="Cleary E.G."/>
        </authorList>
    </citation>
    <scope>NUCLEOTIDE SEQUENCE [MRNA] (ISOFORM 1)</scope>
    <scope>FUNCTION</scope>
</reference>
<reference key="2">
    <citation type="journal article" date="1998" name="J. Biol. Chem.">
        <title>The exon structure of the human MAGP-2 gene. Similarity with the MAGP-1 gene is confined to two exons encoding a cysteine-rich region.</title>
        <authorList>
            <person name="Hatzinikolas G."/>
            <person name="Gibson M.A."/>
        </authorList>
    </citation>
    <scope>NUCLEOTIDE SEQUENCE [GENOMIC DNA / MRNA] (ISOFORM 1)</scope>
</reference>
<reference key="3">
    <citation type="submission" date="2003-07" db="EMBL/GenBank/DDBJ databases">
        <authorList>
            <person name="Li H."/>
            <person name="Cao L."/>
            <person name="Zhou G."/>
            <person name="Shen C."/>
            <person name="Zhong G."/>
            <person name="Yu R."/>
            <person name="Lin L."/>
            <person name="Yang S."/>
        </authorList>
    </citation>
    <scope>NUCLEOTIDE SEQUENCE [MRNA] (ISOFORM 2)</scope>
</reference>
<reference key="4">
    <citation type="journal article" date="2004" name="Nat. Genet.">
        <title>Complete sequencing and characterization of 21,243 full-length human cDNAs.</title>
        <authorList>
            <person name="Ota T."/>
            <person name="Suzuki Y."/>
            <person name="Nishikawa T."/>
            <person name="Otsuki T."/>
            <person name="Sugiyama T."/>
            <person name="Irie R."/>
            <person name="Wakamatsu A."/>
            <person name="Hayashi K."/>
            <person name="Sato H."/>
            <person name="Nagai K."/>
            <person name="Kimura K."/>
            <person name="Makita H."/>
            <person name="Sekine M."/>
            <person name="Obayashi M."/>
            <person name="Nishi T."/>
            <person name="Shibahara T."/>
            <person name="Tanaka T."/>
            <person name="Ishii S."/>
            <person name="Yamamoto J."/>
            <person name="Saito K."/>
            <person name="Kawai Y."/>
            <person name="Isono Y."/>
            <person name="Nakamura Y."/>
            <person name="Nagahari K."/>
            <person name="Murakami K."/>
            <person name="Yasuda T."/>
            <person name="Iwayanagi T."/>
            <person name="Wagatsuma M."/>
            <person name="Shiratori A."/>
            <person name="Sudo H."/>
            <person name="Hosoiri T."/>
            <person name="Kaku Y."/>
            <person name="Kodaira H."/>
            <person name="Kondo H."/>
            <person name="Sugawara M."/>
            <person name="Takahashi M."/>
            <person name="Kanda K."/>
            <person name="Yokoi T."/>
            <person name="Furuya T."/>
            <person name="Kikkawa E."/>
            <person name="Omura Y."/>
            <person name="Abe K."/>
            <person name="Kamihara K."/>
            <person name="Katsuta N."/>
            <person name="Sato K."/>
            <person name="Tanikawa M."/>
            <person name="Yamazaki M."/>
            <person name="Ninomiya K."/>
            <person name="Ishibashi T."/>
            <person name="Yamashita H."/>
            <person name="Murakawa K."/>
            <person name="Fujimori K."/>
            <person name="Tanai H."/>
            <person name="Kimata M."/>
            <person name="Watanabe M."/>
            <person name="Hiraoka S."/>
            <person name="Chiba Y."/>
            <person name="Ishida S."/>
            <person name="Ono Y."/>
            <person name="Takiguchi S."/>
            <person name="Watanabe S."/>
            <person name="Yosida M."/>
            <person name="Hotuta T."/>
            <person name="Kusano J."/>
            <person name="Kanehori K."/>
            <person name="Takahashi-Fujii A."/>
            <person name="Hara H."/>
            <person name="Tanase T.-O."/>
            <person name="Nomura Y."/>
            <person name="Togiya S."/>
            <person name="Komai F."/>
            <person name="Hara R."/>
            <person name="Takeuchi K."/>
            <person name="Arita M."/>
            <person name="Imose N."/>
            <person name="Musashino K."/>
            <person name="Yuuki H."/>
            <person name="Oshima A."/>
            <person name="Sasaki N."/>
            <person name="Aotsuka S."/>
            <person name="Yoshikawa Y."/>
            <person name="Matsunawa H."/>
            <person name="Ichihara T."/>
            <person name="Shiohata N."/>
            <person name="Sano S."/>
            <person name="Moriya S."/>
            <person name="Momiyama H."/>
            <person name="Satoh N."/>
            <person name="Takami S."/>
            <person name="Terashima Y."/>
            <person name="Suzuki O."/>
            <person name="Nakagawa S."/>
            <person name="Senoh A."/>
            <person name="Mizoguchi H."/>
            <person name="Goto Y."/>
            <person name="Shimizu F."/>
            <person name="Wakebe H."/>
            <person name="Hishigaki H."/>
            <person name="Watanabe T."/>
            <person name="Sugiyama A."/>
            <person name="Takemoto M."/>
            <person name="Kawakami B."/>
            <person name="Yamazaki M."/>
            <person name="Watanabe K."/>
            <person name="Kumagai A."/>
            <person name="Itakura S."/>
            <person name="Fukuzumi Y."/>
            <person name="Fujimori Y."/>
            <person name="Komiyama M."/>
            <person name="Tashiro H."/>
            <person name="Tanigami A."/>
            <person name="Fujiwara T."/>
            <person name="Ono T."/>
            <person name="Yamada K."/>
            <person name="Fujii Y."/>
            <person name="Ozaki K."/>
            <person name="Hirao M."/>
            <person name="Ohmori Y."/>
            <person name="Kawabata A."/>
            <person name="Hikiji T."/>
            <person name="Kobatake N."/>
            <person name="Inagaki H."/>
            <person name="Ikema Y."/>
            <person name="Okamoto S."/>
            <person name="Okitani R."/>
            <person name="Kawakami T."/>
            <person name="Noguchi S."/>
            <person name="Itoh T."/>
            <person name="Shigeta K."/>
            <person name="Senba T."/>
            <person name="Matsumura K."/>
            <person name="Nakajima Y."/>
            <person name="Mizuno T."/>
            <person name="Morinaga M."/>
            <person name="Sasaki M."/>
            <person name="Togashi T."/>
            <person name="Oyama M."/>
            <person name="Hata H."/>
            <person name="Watanabe M."/>
            <person name="Komatsu T."/>
            <person name="Mizushima-Sugano J."/>
            <person name="Satoh T."/>
            <person name="Shirai Y."/>
            <person name="Takahashi Y."/>
            <person name="Nakagawa K."/>
            <person name="Okumura K."/>
            <person name="Nagase T."/>
            <person name="Nomura N."/>
            <person name="Kikuchi H."/>
            <person name="Masuho Y."/>
            <person name="Yamashita R."/>
            <person name="Nakai K."/>
            <person name="Yada T."/>
            <person name="Nakamura Y."/>
            <person name="Ohara O."/>
            <person name="Isogai T."/>
            <person name="Sugano S."/>
        </authorList>
    </citation>
    <scope>NUCLEOTIDE SEQUENCE [LARGE SCALE MRNA] (ISOFORMS 1 AND 2)</scope>
    <source>
        <tissue>Tongue</tissue>
    </source>
</reference>
<reference key="5">
    <citation type="journal article" date="2006" name="Nature">
        <title>The finished DNA sequence of human chromosome 12.</title>
        <authorList>
            <person name="Scherer S.E."/>
            <person name="Muzny D.M."/>
            <person name="Buhay C.J."/>
            <person name="Chen R."/>
            <person name="Cree A."/>
            <person name="Ding Y."/>
            <person name="Dugan-Rocha S."/>
            <person name="Gill R."/>
            <person name="Gunaratne P."/>
            <person name="Harris R.A."/>
            <person name="Hawes A.C."/>
            <person name="Hernandez J."/>
            <person name="Hodgson A.V."/>
            <person name="Hume J."/>
            <person name="Jackson A."/>
            <person name="Khan Z.M."/>
            <person name="Kovar-Smith C."/>
            <person name="Lewis L.R."/>
            <person name="Lozado R.J."/>
            <person name="Metzker M.L."/>
            <person name="Milosavljevic A."/>
            <person name="Miner G.R."/>
            <person name="Montgomery K.T."/>
            <person name="Morgan M.B."/>
            <person name="Nazareth L.V."/>
            <person name="Scott G."/>
            <person name="Sodergren E."/>
            <person name="Song X.-Z."/>
            <person name="Steffen D."/>
            <person name="Lovering R.C."/>
            <person name="Wheeler D.A."/>
            <person name="Worley K.C."/>
            <person name="Yuan Y."/>
            <person name="Zhang Z."/>
            <person name="Adams C.Q."/>
            <person name="Ansari-Lari M.A."/>
            <person name="Ayele M."/>
            <person name="Brown M.J."/>
            <person name="Chen G."/>
            <person name="Chen Z."/>
            <person name="Clerc-Blankenburg K.P."/>
            <person name="Davis C."/>
            <person name="Delgado O."/>
            <person name="Dinh H.H."/>
            <person name="Draper H."/>
            <person name="Gonzalez-Garay M.L."/>
            <person name="Havlak P."/>
            <person name="Jackson L.R."/>
            <person name="Jacob L.S."/>
            <person name="Kelly S.H."/>
            <person name="Li L."/>
            <person name="Li Z."/>
            <person name="Liu J."/>
            <person name="Liu W."/>
            <person name="Lu J."/>
            <person name="Maheshwari M."/>
            <person name="Nguyen B.-V."/>
            <person name="Okwuonu G.O."/>
            <person name="Pasternak S."/>
            <person name="Perez L.M."/>
            <person name="Plopper F.J.H."/>
            <person name="Santibanez J."/>
            <person name="Shen H."/>
            <person name="Tabor P.E."/>
            <person name="Verduzco D."/>
            <person name="Waldron L."/>
            <person name="Wang Q."/>
            <person name="Williams G.A."/>
            <person name="Zhang J."/>
            <person name="Zhou J."/>
            <person name="Allen C.C."/>
            <person name="Amin A.G."/>
            <person name="Anyalebechi V."/>
            <person name="Bailey M."/>
            <person name="Barbaria J.A."/>
            <person name="Bimage K.E."/>
            <person name="Bryant N.P."/>
            <person name="Burch P.E."/>
            <person name="Burkett C.E."/>
            <person name="Burrell K.L."/>
            <person name="Calderon E."/>
            <person name="Cardenas V."/>
            <person name="Carter K."/>
            <person name="Casias K."/>
            <person name="Cavazos I."/>
            <person name="Cavazos S.R."/>
            <person name="Ceasar H."/>
            <person name="Chacko J."/>
            <person name="Chan S.N."/>
            <person name="Chavez D."/>
            <person name="Christopoulos C."/>
            <person name="Chu J."/>
            <person name="Cockrell R."/>
            <person name="Cox C.D."/>
            <person name="Dang M."/>
            <person name="Dathorne S.R."/>
            <person name="David R."/>
            <person name="Davis C.M."/>
            <person name="Davy-Carroll L."/>
            <person name="Deshazo D.R."/>
            <person name="Donlin J.E."/>
            <person name="D'Souza L."/>
            <person name="Eaves K.A."/>
            <person name="Egan A."/>
            <person name="Emery-Cohen A.J."/>
            <person name="Escotto M."/>
            <person name="Flagg N."/>
            <person name="Forbes L.D."/>
            <person name="Gabisi A.M."/>
            <person name="Garza M."/>
            <person name="Hamilton C."/>
            <person name="Henderson N."/>
            <person name="Hernandez O."/>
            <person name="Hines S."/>
            <person name="Hogues M.E."/>
            <person name="Huang M."/>
            <person name="Idlebird D.G."/>
            <person name="Johnson R."/>
            <person name="Jolivet A."/>
            <person name="Jones S."/>
            <person name="Kagan R."/>
            <person name="King L.M."/>
            <person name="Leal B."/>
            <person name="Lebow H."/>
            <person name="Lee S."/>
            <person name="LeVan J.M."/>
            <person name="Lewis L.C."/>
            <person name="London P."/>
            <person name="Lorensuhewa L.M."/>
            <person name="Loulseged H."/>
            <person name="Lovett D.A."/>
            <person name="Lucier A."/>
            <person name="Lucier R.L."/>
            <person name="Ma J."/>
            <person name="Madu R.C."/>
            <person name="Mapua P."/>
            <person name="Martindale A.D."/>
            <person name="Martinez E."/>
            <person name="Massey E."/>
            <person name="Mawhiney S."/>
            <person name="Meador M.G."/>
            <person name="Mendez S."/>
            <person name="Mercado C."/>
            <person name="Mercado I.C."/>
            <person name="Merritt C.E."/>
            <person name="Miner Z.L."/>
            <person name="Minja E."/>
            <person name="Mitchell T."/>
            <person name="Mohabbat F."/>
            <person name="Mohabbat K."/>
            <person name="Montgomery B."/>
            <person name="Moore N."/>
            <person name="Morris S."/>
            <person name="Munidasa M."/>
            <person name="Ngo R.N."/>
            <person name="Nguyen N.B."/>
            <person name="Nickerson E."/>
            <person name="Nwaokelemeh O.O."/>
            <person name="Nwokenkwo S."/>
            <person name="Obregon M."/>
            <person name="Oguh M."/>
            <person name="Oragunye N."/>
            <person name="Oviedo R.J."/>
            <person name="Parish B.J."/>
            <person name="Parker D.N."/>
            <person name="Parrish J."/>
            <person name="Parks K.L."/>
            <person name="Paul H.A."/>
            <person name="Payton B.A."/>
            <person name="Perez A."/>
            <person name="Perrin W."/>
            <person name="Pickens A."/>
            <person name="Primus E.L."/>
            <person name="Pu L.-L."/>
            <person name="Puazo M."/>
            <person name="Quiles M.M."/>
            <person name="Quiroz J.B."/>
            <person name="Rabata D."/>
            <person name="Reeves K."/>
            <person name="Ruiz S.J."/>
            <person name="Shao H."/>
            <person name="Sisson I."/>
            <person name="Sonaike T."/>
            <person name="Sorelle R.P."/>
            <person name="Sutton A.E."/>
            <person name="Svatek A.F."/>
            <person name="Svetz L.A."/>
            <person name="Tamerisa K.S."/>
            <person name="Taylor T.R."/>
            <person name="Teague B."/>
            <person name="Thomas N."/>
            <person name="Thorn R.D."/>
            <person name="Trejos Z.Y."/>
            <person name="Trevino B.K."/>
            <person name="Ukegbu O.N."/>
            <person name="Urban J.B."/>
            <person name="Vasquez L.I."/>
            <person name="Vera V.A."/>
            <person name="Villasana D.M."/>
            <person name="Wang L."/>
            <person name="Ward-Moore S."/>
            <person name="Warren J.T."/>
            <person name="Wei X."/>
            <person name="White F."/>
            <person name="Williamson A.L."/>
            <person name="Wleczyk R."/>
            <person name="Wooden H.S."/>
            <person name="Wooden S.H."/>
            <person name="Yen J."/>
            <person name="Yoon L."/>
            <person name="Yoon V."/>
            <person name="Zorrilla S.E."/>
            <person name="Nelson D."/>
            <person name="Kucherlapati R."/>
            <person name="Weinstock G."/>
            <person name="Gibbs R.A."/>
        </authorList>
    </citation>
    <scope>NUCLEOTIDE SEQUENCE [LARGE SCALE GENOMIC DNA]</scope>
</reference>
<reference key="6">
    <citation type="submission" date="2005-09" db="EMBL/GenBank/DDBJ databases">
        <authorList>
            <person name="Mural R.J."/>
            <person name="Istrail S."/>
            <person name="Sutton G.G."/>
            <person name="Florea L."/>
            <person name="Halpern A.L."/>
            <person name="Mobarry C.M."/>
            <person name="Lippert R."/>
            <person name="Walenz B."/>
            <person name="Shatkay H."/>
            <person name="Dew I."/>
            <person name="Miller J.R."/>
            <person name="Flanigan M.J."/>
            <person name="Edwards N.J."/>
            <person name="Bolanos R."/>
            <person name="Fasulo D."/>
            <person name="Halldorsson B.V."/>
            <person name="Hannenhalli S."/>
            <person name="Turner R."/>
            <person name="Yooseph S."/>
            <person name="Lu F."/>
            <person name="Nusskern D.R."/>
            <person name="Shue B.C."/>
            <person name="Zheng X.H."/>
            <person name="Zhong F."/>
            <person name="Delcher A.L."/>
            <person name="Huson D.H."/>
            <person name="Kravitz S.A."/>
            <person name="Mouchard L."/>
            <person name="Reinert K."/>
            <person name="Remington K.A."/>
            <person name="Clark A.G."/>
            <person name="Waterman M.S."/>
            <person name="Eichler E.E."/>
            <person name="Adams M.D."/>
            <person name="Hunkapiller M.W."/>
            <person name="Myers E.W."/>
            <person name="Venter J.C."/>
        </authorList>
    </citation>
    <scope>NUCLEOTIDE SEQUENCE [LARGE SCALE GENOMIC DNA]</scope>
</reference>
<reference key="7">
    <citation type="journal article" date="2004" name="Genome Res.">
        <title>The status, quality, and expansion of the NIH full-length cDNA project: the Mammalian Gene Collection (MGC).</title>
        <authorList>
            <consortium name="The MGC Project Team"/>
        </authorList>
    </citation>
    <scope>NUCLEOTIDE SEQUENCE [LARGE SCALE MRNA] (ISOFORM 1)</scope>
    <source>
        <tissue>Skeletal muscle</tissue>
    </source>
</reference>
<reference key="8">
    <citation type="journal article" date="2009" name="J. Proteome Res.">
        <title>Glycoproteomics analysis of human liver tissue by combination of multiple enzyme digestion and hydrazide chemistry.</title>
        <authorList>
            <person name="Chen R."/>
            <person name="Jiang X."/>
            <person name="Sun D."/>
            <person name="Han G."/>
            <person name="Wang F."/>
            <person name="Ye M."/>
            <person name="Wang L."/>
            <person name="Zou H."/>
        </authorList>
    </citation>
    <scope>GLYCOSYLATION [LARGE SCALE ANALYSIS] AT ASN-79</scope>
    <source>
        <tissue>Liver</tissue>
    </source>
</reference>
<reference key="9">
    <citation type="journal article" date="2012" name="Mol. Cell. Proteomics">
        <title>Human urinary glycoproteomics; attachment site specific analysis of N- and O-linked glycosylations by CID and ECD.</title>
        <authorList>
            <person name="Halim A."/>
            <person name="Nilsson J."/>
            <person name="Ruetschi U."/>
            <person name="Hesse C."/>
            <person name="Larson G."/>
        </authorList>
    </citation>
    <scope>GLYCOSYLATION AT THR-54</scope>
    <scope>STRUCTURE OF CARBOHYDRATES</scope>
    <scope>IDENTIFICATION BY MASS SPECTROMETRY</scope>
</reference>
<reference key="10">
    <citation type="journal article" date="2014" name="Am. J. Hum. Genet.">
        <title>MFAP5 loss-of-function mutations underscore the involvement of matrix alteration in the pathogenesis of familial thoracic aortic aneurysms and dissections.</title>
        <authorList>
            <person name="Barbier M."/>
            <person name="Gross M.S."/>
            <person name="Aubart M."/>
            <person name="Hanna N."/>
            <person name="Kessler K."/>
            <person name="Guo D.C."/>
            <person name="Tosolini L."/>
            <person name="Ho-Tin-Noe B."/>
            <person name="Regalado E."/>
            <person name="Varret M."/>
            <person name="Abifadel M."/>
            <person name="Milleron O."/>
            <person name="Odent S."/>
            <person name="Dupuis-Girod S."/>
            <person name="Faivre L."/>
            <person name="Edouard T."/>
            <person name="Dulac Y."/>
            <person name="Busa T."/>
            <person name="Gouya L."/>
            <person name="Milewicz D.M."/>
            <person name="Jondeau G."/>
            <person name="Boileau C."/>
        </authorList>
    </citation>
    <scope>INVOLVEMENT IN AAT9</scope>
    <scope>VARIANT AAT9 LEU-21</scope>
    <scope>CHARACTERIZATION OF VARIANT AAT9 LEU-21</scope>
</reference>
<reference key="11">
    <citation type="journal article" date="2006" name="Science">
        <title>The consensus coding sequences of human breast and colorectal cancers.</title>
        <authorList>
            <person name="Sjoeblom T."/>
            <person name="Jones S."/>
            <person name="Wood L.D."/>
            <person name="Parsons D.W."/>
            <person name="Lin J."/>
            <person name="Barber T.D."/>
            <person name="Mandelker D."/>
            <person name="Leary R.J."/>
            <person name="Ptak J."/>
            <person name="Silliman N."/>
            <person name="Szabo S."/>
            <person name="Buckhaults P."/>
            <person name="Farrell C."/>
            <person name="Meeh P."/>
            <person name="Markowitz S.D."/>
            <person name="Willis J."/>
            <person name="Dawson D."/>
            <person name="Willson J.K.V."/>
            <person name="Gazdar A.F."/>
            <person name="Hartigan J."/>
            <person name="Wu L."/>
            <person name="Liu C."/>
            <person name="Parmigiani G."/>
            <person name="Park B.H."/>
            <person name="Bachman K.E."/>
            <person name="Papadopoulos N."/>
            <person name="Vogelstein B."/>
            <person name="Kinzler K.W."/>
            <person name="Velculescu V.E."/>
        </authorList>
    </citation>
    <scope>VARIANT [LARGE SCALE ANALYSIS] ASP-61</scope>
</reference>
<feature type="signal peptide" evidence="3">
    <location>
        <begin position="1"/>
        <end position="21"/>
    </location>
</feature>
<feature type="chain" id="PRO_0000018685" description="Microfibrillar-associated protein 5">
    <location>
        <begin position="22"/>
        <end position="173"/>
    </location>
</feature>
<feature type="short sequence motif" description="Cell attachment site" evidence="3">
    <location>
        <begin position="30"/>
        <end position="32"/>
    </location>
</feature>
<feature type="glycosylation site" description="O-linked (GalNAc...) threonine" evidence="6">
    <location>
        <position position="54"/>
    </location>
</feature>
<feature type="glycosylation site" description="N-linked (GlcNAc...) asparagine" evidence="5">
    <location>
        <position position="79"/>
    </location>
</feature>
<feature type="splice variant" id="VSP_056618" description="In isoform 2." evidence="9 10">
    <location>
        <begin position="73"/>
        <end position="82"/>
    </location>
</feature>
<feature type="sequence variant" id="VAR_072688" description="In AAT9; expression of the mutant protein is significantly decreased; dbSNP:rs724159961." evidence="7">
    <original>W</original>
    <variation>L</variation>
    <location>
        <position position="21"/>
    </location>
</feature>
<feature type="sequence variant" id="VAR_036430" description="In a breast cancer sample; somatic mutation." evidence="4">
    <original>V</original>
    <variation>D</variation>
    <location>
        <position position="61"/>
    </location>
</feature>
<dbReference type="EMBL" id="U37283">
    <property type="protein sequence ID" value="AAA96752.1"/>
    <property type="molecule type" value="mRNA"/>
</dbReference>
<dbReference type="EMBL" id="AF084927">
    <property type="protein sequence ID" value="AAC83942.1"/>
    <property type="molecule type" value="Genomic_DNA"/>
</dbReference>
<dbReference type="EMBL" id="AF084919">
    <property type="protein sequence ID" value="AAC83942.1"/>
    <property type="status" value="JOINED"/>
    <property type="molecule type" value="Genomic_DNA"/>
</dbReference>
<dbReference type="EMBL" id="AF084920">
    <property type="protein sequence ID" value="AAC83942.1"/>
    <property type="status" value="JOINED"/>
    <property type="molecule type" value="Genomic_DNA"/>
</dbReference>
<dbReference type="EMBL" id="AF084921">
    <property type="protein sequence ID" value="AAC83942.1"/>
    <property type="status" value="JOINED"/>
    <property type="molecule type" value="Genomic_DNA"/>
</dbReference>
<dbReference type="EMBL" id="AF084922">
    <property type="protein sequence ID" value="AAC83942.1"/>
    <property type="status" value="JOINED"/>
    <property type="molecule type" value="Genomic_DNA"/>
</dbReference>
<dbReference type="EMBL" id="AF084923">
    <property type="protein sequence ID" value="AAC83942.1"/>
    <property type="status" value="JOINED"/>
    <property type="molecule type" value="Genomic_DNA"/>
</dbReference>
<dbReference type="EMBL" id="AF084924">
    <property type="protein sequence ID" value="AAC83942.1"/>
    <property type="status" value="JOINED"/>
    <property type="molecule type" value="Genomic_DNA"/>
</dbReference>
<dbReference type="EMBL" id="AF084925">
    <property type="protein sequence ID" value="AAC83942.1"/>
    <property type="status" value="JOINED"/>
    <property type="molecule type" value="Genomic_DNA"/>
</dbReference>
<dbReference type="EMBL" id="AF084926">
    <property type="protein sequence ID" value="AAC83942.1"/>
    <property type="status" value="JOINED"/>
    <property type="molecule type" value="Genomic_DNA"/>
</dbReference>
<dbReference type="EMBL" id="AY339060">
    <property type="protein sequence ID" value="AAQ18021.1"/>
    <property type="molecule type" value="mRNA"/>
</dbReference>
<dbReference type="EMBL" id="AK299475">
    <property type="protein sequence ID" value="BAG61439.1"/>
    <property type="molecule type" value="mRNA"/>
</dbReference>
<dbReference type="EMBL" id="AK315807">
    <property type="protein sequence ID" value="BAF98698.1"/>
    <property type="molecule type" value="mRNA"/>
</dbReference>
<dbReference type="EMBL" id="AC092184">
    <property type="status" value="NOT_ANNOTATED_CDS"/>
    <property type="molecule type" value="Genomic_DNA"/>
</dbReference>
<dbReference type="EMBL" id="AC092490">
    <property type="status" value="NOT_ANNOTATED_CDS"/>
    <property type="molecule type" value="Genomic_DNA"/>
</dbReference>
<dbReference type="EMBL" id="CH471116">
    <property type="protein sequence ID" value="EAW88613.1"/>
    <property type="molecule type" value="Genomic_DNA"/>
</dbReference>
<dbReference type="EMBL" id="CH471116">
    <property type="protein sequence ID" value="EAW88614.1"/>
    <property type="molecule type" value="Genomic_DNA"/>
</dbReference>
<dbReference type="EMBL" id="BC005901">
    <property type="protein sequence ID" value="AAH05901.1"/>
    <property type="molecule type" value="mRNA"/>
</dbReference>
<dbReference type="CCDS" id="CCDS73437.1">
    <molecule id="Q13361-2"/>
</dbReference>
<dbReference type="CCDS" id="CCDS8595.1">
    <molecule id="Q13361-1"/>
</dbReference>
<dbReference type="RefSeq" id="NP_001284638.1">
    <molecule id="Q13361-2"/>
    <property type="nucleotide sequence ID" value="NM_001297709.2"/>
</dbReference>
<dbReference type="RefSeq" id="NP_003471.1">
    <molecule id="Q13361-1"/>
    <property type="nucleotide sequence ID" value="NM_003480.4"/>
</dbReference>
<dbReference type="RefSeq" id="XP_054229268.1">
    <molecule id="Q13361-1"/>
    <property type="nucleotide sequence ID" value="XM_054373293.1"/>
</dbReference>
<dbReference type="RefSeq" id="XP_054229269.1">
    <molecule id="Q13361-2"/>
    <property type="nucleotide sequence ID" value="XM_054373294.1"/>
</dbReference>
<dbReference type="BioGRID" id="113750">
    <property type="interactions" value="68"/>
</dbReference>
<dbReference type="FunCoup" id="Q13361">
    <property type="interactions" value="78"/>
</dbReference>
<dbReference type="IntAct" id="Q13361">
    <property type="interactions" value="44"/>
</dbReference>
<dbReference type="STRING" id="9606.ENSP00000352455"/>
<dbReference type="GlyConnect" id="752">
    <property type="glycosylation" value="4 N-Linked glycans (1 site), 3 O-Linked glycans (1 site)"/>
</dbReference>
<dbReference type="GlyCosmos" id="Q13361">
    <property type="glycosylation" value="3 sites, 6 glycans"/>
</dbReference>
<dbReference type="GlyGen" id="Q13361">
    <property type="glycosylation" value="3 sites, 33 N-linked glycans (1 site), 3 O-linked glycans (2 sites)"/>
</dbReference>
<dbReference type="iPTMnet" id="Q13361"/>
<dbReference type="PhosphoSitePlus" id="Q13361"/>
<dbReference type="BioMuta" id="MFAP5"/>
<dbReference type="DMDM" id="2498553"/>
<dbReference type="jPOST" id="Q13361"/>
<dbReference type="MassIVE" id="Q13361"/>
<dbReference type="PaxDb" id="9606-ENSP00000352455"/>
<dbReference type="PeptideAtlas" id="Q13361"/>
<dbReference type="ProteomicsDB" id="59344">
    <molecule id="Q13361-1"/>
</dbReference>
<dbReference type="ProteomicsDB" id="69162"/>
<dbReference type="Antibodypedia" id="2040">
    <property type="antibodies" value="214 antibodies from 34 providers"/>
</dbReference>
<dbReference type="DNASU" id="8076"/>
<dbReference type="Ensembl" id="ENST00000359478.7">
    <molecule id="Q13361-1"/>
    <property type="protein sequence ID" value="ENSP00000352455.2"/>
    <property type="gene ID" value="ENSG00000197614.11"/>
</dbReference>
<dbReference type="Ensembl" id="ENST00000396549.6">
    <molecule id="Q13361-2"/>
    <property type="protein sequence ID" value="ENSP00000379798.2"/>
    <property type="gene ID" value="ENSG00000197614.11"/>
</dbReference>
<dbReference type="Ensembl" id="ENST00000540087.5">
    <molecule id="Q13361-2"/>
    <property type="protein sequence ID" value="ENSP00000440496.1"/>
    <property type="gene ID" value="ENSG00000197614.11"/>
</dbReference>
<dbReference type="GeneID" id="8076"/>
<dbReference type="KEGG" id="hsa:8076"/>
<dbReference type="MANE-Select" id="ENST00000359478.7">
    <property type="protein sequence ID" value="ENSP00000352455.2"/>
    <property type="RefSeq nucleotide sequence ID" value="NM_003480.4"/>
    <property type="RefSeq protein sequence ID" value="NP_003471.1"/>
</dbReference>
<dbReference type="UCSC" id="uc001qus.3">
    <molecule id="Q13361-1"/>
    <property type="organism name" value="human"/>
</dbReference>
<dbReference type="AGR" id="HGNC:29673"/>
<dbReference type="CTD" id="8076"/>
<dbReference type="DisGeNET" id="8076"/>
<dbReference type="GeneCards" id="MFAP5"/>
<dbReference type="HGNC" id="HGNC:29673">
    <property type="gene designation" value="MFAP5"/>
</dbReference>
<dbReference type="HPA" id="ENSG00000197614">
    <property type="expression patterns" value="Tissue enhanced (endometrium)"/>
</dbReference>
<dbReference type="MalaCards" id="MFAP5"/>
<dbReference type="MIM" id="601103">
    <property type="type" value="gene"/>
</dbReference>
<dbReference type="MIM" id="616166">
    <property type="type" value="phenotype"/>
</dbReference>
<dbReference type="neXtProt" id="NX_Q13361"/>
<dbReference type="OpenTargets" id="ENSG00000197614"/>
<dbReference type="Orphanet" id="91387">
    <property type="disease" value="Familial thoracic aortic aneurysm and aortic dissection"/>
</dbReference>
<dbReference type="PharmGKB" id="PA134915148"/>
<dbReference type="VEuPathDB" id="HostDB:ENSG00000197614"/>
<dbReference type="eggNOG" id="ENOG502S4DY">
    <property type="taxonomic scope" value="Eukaryota"/>
</dbReference>
<dbReference type="GeneTree" id="ENSGT00390000017736"/>
<dbReference type="InParanoid" id="Q13361"/>
<dbReference type="OMA" id="XCRDEKF"/>
<dbReference type="OrthoDB" id="9446021at2759"/>
<dbReference type="PAN-GO" id="Q13361">
    <property type="GO annotations" value="2 GO annotations based on evolutionary models"/>
</dbReference>
<dbReference type="PhylomeDB" id="Q13361"/>
<dbReference type="TreeFam" id="TF333418"/>
<dbReference type="PathwayCommons" id="Q13361"/>
<dbReference type="Reactome" id="R-HSA-1566948">
    <property type="pathway name" value="Elastic fibre formation"/>
</dbReference>
<dbReference type="Reactome" id="R-HSA-2129379">
    <property type="pathway name" value="Molecules associated with elastic fibres"/>
</dbReference>
<dbReference type="SignaLink" id="Q13361"/>
<dbReference type="BioGRID-ORCS" id="8076">
    <property type="hits" value="12 hits in 1140 CRISPR screens"/>
</dbReference>
<dbReference type="ChiTaRS" id="MFAP5">
    <property type="organism name" value="human"/>
</dbReference>
<dbReference type="GeneWiki" id="MFAP5"/>
<dbReference type="GenomeRNAi" id="8076"/>
<dbReference type="Pharos" id="Q13361">
    <property type="development level" value="Tbio"/>
</dbReference>
<dbReference type="PRO" id="PR:Q13361"/>
<dbReference type="Proteomes" id="UP000005640">
    <property type="component" value="Chromosome 12"/>
</dbReference>
<dbReference type="RNAct" id="Q13361">
    <property type="molecule type" value="protein"/>
</dbReference>
<dbReference type="Bgee" id="ENSG00000197614">
    <property type="expression patterns" value="Expressed in synovial joint and 165 other cell types or tissues"/>
</dbReference>
<dbReference type="ExpressionAtlas" id="Q13361">
    <property type="expression patterns" value="baseline and differential"/>
</dbReference>
<dbReference type="GO" id="GO:0062023">
    <property type="term" value="C:collagen-containing extracellular matrix"/>
    <property type="evidence" value="ECO:0007005"/>
    <property type="project" value="BHF-UCL"/>
</dbReference>
<dbReference type="GO" id="GO:0005576">
    <property type="term" value="C:extracellular region"/>
    <property type="evidence" value="ECO:0000304"/>
    <property type="project" value="Reactome"/>
</dbReference>
<dbReference type="GO" id="GO:0001527">
    <property type="term" value="C:microfibril"/>
    <property type="evidence" value="ECO:0000250"/>
    <property type="project" value="UniProtKB"/>
</dbReference>
<dbReference type="GO" id="GO:0005201">
    <property type="term" value="F:extracellular matrix structural constituent"/>
    <property type="evidence" value="ECO:0000304"/>
    <property type="project" value="ProtInc"/>
</dbReference>
<dbReference type="GO" id="GO:0060216">
    <property type="term" value="P:definitive hemopoiesis"/>
    <property type="evidence" value="ECO:0000250"/>
    <property type="project" value="UniProtKB"/>
</dbReference>
<dbReference type="GO" id="GO:0048048">
    <property type="term" value="P:embryonic eye morphogenesis"/>
    <property type="evidence" value="ECO:0000318"/>
    <property type="project" value="GO_Central"/>
</dbReference>
<dbReference type="GO" id="GO:0097435">
    <property type="term" value="P:supramolecular fiber organization"/>
    <property type="evidence" value="ECO:0007669"/>
    <property type="project" value="Ensembl"/>
</dbReference>
<dbReference type="InterPro" id="IPR008673">
    <property type="entry name" value="MAGP"/>
</dbReference>
<dbReference type="PANTHER" id="PTHR16485">
    <property type="entry name" value="MICROFIBRILLAR-ASSOCIATED PROTEIN 2"/>
    <property type="match status" value="1"/>
</dbReference>
<dbReference type="PANTHER" id="PTHR16485:SF6">
    <property type="entry name" value="MICROFIBRILLAR-ASSOCIATED PROTEIN 5"/>
    <property type="match status" value="1"/>
</dbReference>
<dbReference type="Pfam" id="PF05507">
    <property type="entry name" value="MAGP"/>
    <property type="match status" value="1"/>
</dbReference>
<accession>Q13361</accession>
<accession>B0AZL6</accession>
<accession>D3DUV1</accession>
<accession>Q7Z490</accession>
<gene>
    <name type="primary">MFAP5</name>
    <name type="synonym">MAGP2</name>
</gene>
<sequence>MSLLGPKVLLFLAAFIITSDWIPLGVNSQRGDDVTQATPETFTEDPNLVNDPATDETVLAVLADIAPSTDDLASLSEKNTTAECWDEKFTCTRLYSVHRPVKQCIHQLCFTSLRRMYIVNKEICSRLVCKEHEAMKDELCRQMAGLPPRRLRRSNYFRLPPCENVDLQRPNGL</sequence>
<name>MFAP5_HUMAN</name>
<keyword id="KW-0025">Alternative splicing</keyword>
<keyword id="KW-0993">Aortic aneurysm</keyword>
<keyword id="KW-0225">Disease variant</keyword>
<keyword id="KW-1015">Disulfide bond</keyword>
<keyword id="KW-0272">Extracellular matrix</keyword>
<keyword id="KW-0325">Glycoprotein</keyword>
<keyword id="KW-1267">Proteomics identification</keyword>
<keyword id="KW-1185">Reference proteome</keyword>
<keyword id="KW-0964">Secreted</keyword>
<keyword id="KW-0732">Signal</keyword>
<evidence type="ECO:0000250" key="1">
    <source>
        <dbReference type="UniProtKB" id="Q28022"/>
    </source>
</evidence>
<evidence type="ECO:0000250" key="2">
    <source>
        <dbReference type="UniProtKB" id="Q9QZJ6"/>
    </source>
</evidence>
<evidence type="ECO:0000255" key="3"/>
<evidence type="ECO:0000269" key="4">
    <source>
    </source>
</evidence>
<evidence type="ECO:0000269" key="5">
    <source>
    </source>
</evidence>
<evidence type="ECO:0000269" key="6">
    <source>
    </source>
</evidence>
<evidence type="ECO:0000269" key="7">
    <source>
    </source>
</evidence>
<evidence type="ECO:0000269" key="8">
    <source>
    </source>
</evidence>
<evidence type="ECO:0000303" key="9">
    <source>
    </source>
</evidence>
<evidence type="ECO:0000303" key="10">
    <source ref="3"/>
</evidence>
<evidence type="ECO:0000305" key="11"/>